<protein>
    <recommendedName>
        <fullName>26S proteasome non-ATPase regulatory subunit 11</fullName>
    </recommendedName>
    <alternativeName>
        <fullName>26S proteasome regulatory subunit RPN6</fullName>
    </alternativeName>
    <alternativeName>
        <fullName>26S proteasome regulatory subunit S9</fullName>
    </alternativeName>
</protein>
<accession>Q54UB5</accession>
<sequence>MNWKEQLEEIGNCQDSNKAIQDYNKILTIQESPDDIKEEAILRLAKLFVKIGKGDQLPTLLRSVRPFFDKISKPKTDKIVRNFIDIFSTVPDNLTTLIEFVKENIQWCKDTNRIYLRQRLETKLFTLMFEAKDYANALSGLTTLLTEIKRLDDKPLLVEIQLVESRIQHALKNIPKARAALTSARTNANTIYCPPKLQAEIDMQSGILHSEEKDYKTAFSYFFESYETYDSLEDPFAMKALKYMLLCKIMTNQTDDVHALVNGKIGLKYHNNRSIEAITQISKSHAKRSLHMFQEVTKEFSDQLSDDPIIHSHLTELYSNLLEQNLCRIIEPFSRVEISHIAKLIDLPVDVVERKLSLMILDKKYNGILDQGTGTLIVFEEQKEDKLFNCSLETIGALSRVVDLLYEKTNKLS</sequence>
<comment type="function">
    <text evidence="1">Component of the lid subcomplex of the 26S proteasome, a multiprotein complex involved in the ATP-dependent degradation of ubiquitinated proteins. In the complex, psmD11 is required for proteasome assembly (By similarity).</text>
</comment>
<comment type="subunit">
    <text evidence="1">Component of the lid subcomplex of the 19S proteasome regulatory particle complex (also named PA700 complex). The 26S proteasome consists of a 20S proteasome core and two 19S regulatory subunits (By similarity).</text>
</comment>
<comment type="similarity">
    <text evidence="3">Belongs to the proteasome subunit S9 family.</text>
</comment>
<keyword id="KW-0647">Proteasome</keyword>
<keyword id="KW-1185">Reference proteome</keyword>
<organism>
    <name type="scientific">Dictyostelium discoideum</name>
    <name type="common">Social amoeba</name>
    <dbReference type="NCBI Taxonomy" id="44689"/>
    <lineage>
        <taxon>Eukaryota</taxon>
        <taxon>Amoebozoa</taxon>
        <taxon>Evosea</taxon>
        <taxon>Eumycetozoa</taxon>
        <taxon>Dictyostelia</taxon>
        <taxon>Dictyosteliales</taxon>
        <taxon>Dictyosteliaceae</taxon>
        <taxon>Dictyostelium</taxon>
    </lineage>
</organism>
<dbReference type="EMBL" id="AAFI02000040">
    <property type="protein sequence ID" value="EAL66954.1"/>
    <property type="molecule type" value="Genomic_DNA"/>
</dbReference>
<dbReference type="RefSeq" id="XP_640861.1">
    <property type="nucleotide sequence ID" value="XM_635769.1"/>
</dbReference>
<dbReference type="SMR" id="Q54UB5"/>
<dbReference type="FunCoup" id="Q54UB5">
    <property type="interactions" value="961"/>
</dbReference>
<dbReference type="STRING" id="44689.Q54UB5"/>
<dbReference type="PaxDb" id="44689-DDB0232994"/>
<dbReference type="EnsemblProtists" id="EAL66954">
    <property type="protein sequence ID" value="EAL66954"/>
    <property type="gene ID" value="DDB_G0281315"/>
</dbReference>
<dbReference type="GeneID" id="8622917"/>
<dbReference type="KEGG" id="ddi:DDB_G0281315"/>
<dbReference type="dictyBase" id="DDB_G0281315">
    <property type="gene designation" value="psmD11"/>
</dbReference>
<dbReference type="VEuPathDB" id="AmoebaDB:DDB_G0281315"/>
<dbReference type="eggNOG" id="KOG1463">
    <property type="taxonomic scope" value="Eukaryota"/>
</dbReference>
<dbReference type="HOGENOM" id="CLU_029573_2_1_1"/>
<dbReference type="InParanoid" id="Q54UB5"/>
<dbReference type="OMA" id="ESKIYHA"/>
<dbReference type="PhylomeDB" id="Q54UB5"/>
<dbReference type="Reactome" id="R-DDI-1236978">
    <property type="pathway name" value="Cross-presentation of soluble exogenous antigens (endosomes)"/>
</dbReference>
<dbReference type="Reactome" id="R-DDI-174084">
    <property type="pathway name" value="Autodegradation of Cdh1 by Cdh1:APC/C"/>
</dbReference>
<dbReference type="Reactome" id="R-DDI-174154">
    <property type="pathway name" value="APC/C:Cdc20 mediated degradation of Securin"/>
</dbReference>
<dbReference type="Reactome" id="R-DDI-174178">
    <property type="pathway name" value="APC/C:Cdh1 mediated degradation of Cdc20 and other APC/C:Cdh1 targeted proteins in late mitosis/early G1"/>
</dbReference>
<dbReference type="Reactome" id="R-DDI-2467813">
    <property type="pathway name" value="Separation of Sister Chromatids"/>
</dbReference>
<dbReference type="Reactome" id="R-DDI-349425">
    <property type="pathway name" value="Autodegradation of the E3 ubiquitin ligase COP1"/>
</dbReference>
<dbReference type="Reactome" id="R-DDI-382556">
    <property type="pathway name" value="ABC-family proteins mediated transport"/>
</dbReference>
<dbReference type="Reactome" id="R-DDI-450408">
    <property type="pathway name" value="AUF1 (hnRNP D0) binds and destabilizes mRNA"/>
</dbReference>
<dbReference type="Reactome" id="R-DDI-4641258">
    <property type="pathway name" value="Degradation of DVL"/>
</dbReference>
<dbReference type="Reactome" id="R-DDI-5632684">
    <property type="pathway name" value="Hedgehog 'on' state"/>
</dbReference>
<dbReference type="Reactome" id="R-DDI-5658442">
    <property type="pathway name" value="Regulation of RAS by GAPs"/>
</dbReference>
<dbReference type="Reactome" id="R-DDI-5687128">
    <property type="pathway name" value="MAPK6/MAPK4 signaling"/>
</dbReference>
<dbReference type="Reactome" id="R-DDI-5689603">
    <property type="pathway name" value="UCH proteinases"/>
</dbReference>
<dbReference type="Reactome" id="R-DDI-5689880">
    <property type="pathway name" value="Ub-specific processing proteases"/>
</dbReference>
<dbReference type="Reactome" id="R-DDI-6798695">
    <property type="pathway name" value="Neutrophil degranulation"/>
</dbReference>
<dbReference type="Reactome" id="R-DDI-68949">
    <property type="pathway name" value="Orc1 removal from chromatin"/>
</dbReference>
<dbReference type="Reactome" id="R-DDI-69017">
    <property type="pathway name" value="CDK-mediated phosphorylation and removal of Cdc6"/>
</dbReference>
<dbReference type="Reactome" id="R-DDI-69601">
    <property type="pathway name" value="Ubiquitin Mediated Degradation of Phosphorylated Cdc25A"/>
</dbReference>
<dbReference type="Reactome" id="R-DDI-8854050">
    <property type="pathway name" value="FBXL7 down-regulates AURKA during mitotic entry and in early mitosis"/>
</dbReference>
<dbReference type="Reactome" id="R-DDI-8948751">
    <property type="pathway name" value="Regulation of PTEN stability and activity"/>
</dbReference>
<dbReference type="Reactome" id="R-DDI-8951664">
    <property type="pathway name" value="Neddylation"/>
</dbReference>
<dbReference type="Reactome" id="R-DDI-9755511">
    <property type="pathway name" value="KEAP1-NFE2L2 pathway"/>
</dbReference>
<dbReference type="Reactome" id="R-DDI-983168">
    <property type="pathway name" value="Antigen processing: Ubiquitination &amp; Proteasome degradation"/>
</dbReference>
<dbReference type="Reactome" id="R-DDI-9907900">
    <property type="pathway name" value="Proteasome assembly"/>
</dbReference>
<dbReference type="PRO" id="PR:Q54UB5"/>
<dbReference type="Proteomes" id="UP000002195">
    <property type="component" value="Chromosome 3"/>
</dbReference>
<dbReference type="GO" id="GO:0005838">
    <property type="term" value="C:proteasome regulatory particle"/>
    <property type="evidence" value="ECO:0000250"/>
    <property type="project" value="dictyBase"/>
</dbReference>
<dbReference type="GO" id="GO:0008541">
    <property type="term" value="C:proteasome regulatory particle, lid subcomplex"/>
    <property type="evidence" value="ECO:0000318"/>
    <property type="project" value="GO_Central"/>
</dbReference>
<dbReference type="GO" id="GO:0005198">
    <property type="term" value="F:structural molecule activity"/>
    <property type="evidence" value="ECO:0000318"/>
    <property type="project" value="GO_Central"/>
</dbReference>
<dbReference type="GO" id="GO:0006972">
    <property type="term" value="P:hyperosmotic response"/>
    <property type="evidence" value="ECO:0000270"/>
    <property type="project" value="dictyBase"/>
</dbReference>
<dbReference type="GO" id="GO:0006511">
    <property type="term" value="P:ubiquitin-dependent protein catabolic process"/>
    <property type="evidence" value="ECO:0000318"/>
    <property type="project" value="GO_Central"/>
</dbReference>
<dbReference type="FunFam" id="1.25.40.570:FF:000016">
    <property type="entry name" value="26S proteasome regulatory subunit"/>
    <property type="match status" value="1"/>
</dbReference>
<dbReference type="Gene3D" id="1.25.40.570">
    <property type="match status" value="1"/>
</dbReference>
<dbReference type="InterPro" id="IPR050871">
    <property type="entry name" value="26S_Proteasome/COP9_Components"/>
</dbReference>
<dbReference type="InterPro" id="IPR000717">
    <property type="entry name" value="PCI_dom"/>
</dbReference>
<dbReference type="InterPro" id="IPR040780">
    <property type="entry name" value="Rpn6_C_helix"/>
</dbReference>
<dbReference type="InterPro" id="IPR040773">
    <property type="entry name" value="Rpn6_N"/>
</dbReference>
<dbReference type="InterPro" id="IPR011990">
    <property type="entry name" value="TPR-like_helical_dom_sf"/>
</dbReference>
<dbReference type="InterPro" id="IPR036390">
    <property type="entry name" value="WH_DNA-bd_sf"/>
</dbReference>
<dbReference type="PANTHER" id="PTHR10678">
    <property type="entry name" value="26S PROTEASOME NON-ATPASE REGULATORY SUBUNIT 11/COP9 SIGNALOSOME COMPLEX SUBUNIT 2"/>
    <property type="match status" value="1"/>
</dbReference>
<dbReference type="Pfam" id="PF01399">
    <property type="entry name" value="PCI"/>
    <property type="match status" value="1"/>
</dbReference>
<dbReference type="Pfam" id="PF18503">
    <property type="entry name" value="RPN6_C_helix"/>
    <property type="match status" value="1"/>
</dbReference>
<dbReference type="Pfam" id="PF18055">
    <property type="entry name" value="RPN6_N"/>
    <property type="match status" value="1"/>
</dbReference>
<dbReference type="SMART" id="SM00753">
    <property type="entry name" value="PAM"/>
    <property type="match status" value="1"/>
</dbReference>
<dbReference type="SMART" id="SM00088">
    <property type="entry name" value="PINT"/>
    <property type="match status" value="1"/>
</dbReference>
<dbReference type="SUPFAM" id="SSF48452">
    <property type="entry name" value="TPR-like"/>
    <property type="match status" value="1"/>
</dbReference>
<dbReference type="SUPFAM" id="SSF46785">
    <property type="entry name" value="Winged helix' DNA-binding domain"/>
    <property type="match status" value="1"/>
</dbReference>
<dbReference type="PROSITE" id="PS50250">
    <property type="entry name" value="PCI"/>
    <property type="match status" value="1"/>
</dbReference>
<name>PSD11_DICDI</name>
<reference key="1">
    <citation type="journal article" date="2005" name="Nature">
        <title>The genome of the social amoeba Dictyostelium discoideum.</title>
        <authorList>
            <person name="Eichinger L."/>
            <person name="Pachebat J.A."/>
            <person name="Gloeckner G."/>
            <person name="Rajandream M.A."/>
            <person name="Sucgang R."/>
            <person name="Berriman M."/>
            <person name="Song J."/>
            <person name="Olsen R."/>
            <person name="Szafranski K."/>
            <person name="Xu Q."/>
            <person name="Tunggal B."/>
            <person name="Kummerfeld S."/>
            <person name="Madera M."/>
            <person name="Konfortov B.A."/>
            <person name="Rivero F."/>
            <person name="Bankier A.T."/>
            <person name="Lehmann R."/>
            <person name="Hamlin N."/>
            <person name="Davies R."/>
            <person name="Gaudet P."/>
            <person name="Fey P."/>
            <person name="Pilcher K."/>
            <person name="Chen G."/>
            <person name="Saunders D."/>
            <person name="Sodergren E.J."/>
            <person name="Davis P."/>
            <person name="Kerhornou A."/>
            <person name="Nie X."/>
            <person name="Hall N."/>
            <person name="Anjard C."/>
            <person name="Hemphill L."/>
            <person name="Bason N."/>
            <person name="Farbrother P."/>
            <person name="Desany B."/>
            <person name="Just E."/>
            <person name="Morio T."/>
            <person name="Rost R."/>
            <person name="Churcher C.M."/>
            <person name="Cooper J."/>
            <person name="Haydock S."/>
            <person name="van Driessche N."/>
            <person name="Cronin A."/>
            <person name="Goodhead I."/>
            <person name="Muzny D.M."/>
            <person name="Mourier T."/>
            <person name="Pain A."/>
            <person name="Lu M."/>
            <person name="Harper D."/>
            <person name="Lindsay R."/>
            <person name="Hauser H."/>
            <person name="James K.D."/>
            <person name="Quiles M."/>
            <person name="Madan Babu M."/>
            <person name="Saito T."/>
            <person name="Buchrieser C."/>
            <person name="Wardroper A."/>
            <person name="Felder M."/>
            <person name="Thangavelu M."/>
            <person name="Johnson D."/>
            <person name="Knights A."/>
            <person name="Loulseged H."/>
            <person name="Mungall K.L."/>
            <person name="Oliver K."/>
            <person name="Price C."/>
            <person name="Quail M.A."/>
            <person name="Urushihara H."/>
            <person name="Hernandez J."/>
            <person name="Rabbinowitsch E."/>
            <person name="Steffen D."/>
            <person name="Sanders M."/>
            <person name="Ma J."/>
            <person name="Kohara Y."/>
            <person name="Sharp S."/>
            <person name="Simmonds M.N."/>
            <person name="Spiegler S."/>
            <person name="Tivey A."/>
            <person name="Sugano S."/>
            <person name="White B."/>
            <person name="Walker D."/>
            <person name="Woodward J.R."/>
            <person name="Winckler T."/>
            <person name="Tanaka Y."/>
            <person name="Shaulsky G."/>
            <person name="Schleicher M."/>
            <person name="Weinstock G.M."/>
            <person name="Rosenthal A."/>
            <person name="Cox E.C."/>
            <person name="Chisholm R.L."/>
            <person name="Gibbs R.A."/>
            <person name="Loomis W.F."/>
            <person name="Platzer M."/>
            <person name="Kay R.R."/>
            <person name="Williams J.G."/>
            <person name="Dear P.H."/>
            <person name="Noegel A.A."/>
            <person name="Barrell B.G."/>
            <person name="Kuspa A."/>
        </authorList>
    </citation>
    <scope>NUCLEOTIDE SEQUENCE [LARGE SCALE GENOMIC DNA]</scope>
    <source>
        <strain>AX4</strain>
    </source>
</reference>
<evidence type="ECO:0000250" key="1"/>
<evidence type="ECO:0000255" key="2">
    <source>
        <dbReference type="PROSITE-ProRule" id="PRU01185"/>
    </source>
</evidence>
<evidence type="ECO:0000305" key="3"/>
<feature type="chain" id="PRO_0000327459" description="26S proteasome non-ATPase regulatory subunit 11">
    <location>
        <begin position="1"/>
        <end position="413"/>
    </location>
</feature>
<feature type="domain" description="PCI" evidence="2">
    <location>
        <begin position="217"/>
        <end position="383"/>
    </location>
</feature>
<proteinExistence type="evidence at transcript level"/>
<gene>
    <name type="primary">psmD11</name>
    <name type="ORF">DDB_G0281315</name>
</gene>